<feature type="transit peptide" description="Mitochondrion" evidence="2">
    <location>
        <begin position="1"/>
        <end status="unknown"/>
    </location>
</feature>
<feature type="chain" id="PRO_0000250507" description="Large ribosomal subunit protein uL18m">
    <location>
        <begin status="unknown"/>
        <end position="180"/>
    </location>
</feature>
<sequence length="180" mass="20397">MALRSRSWELLPVCRNPGCRVAAFSTSAKPVVKPEADPVGNEAVAPEFTNRNPRNLELLAVARKERGWGTVWPSREFWHRLRVIRSQHHIEALVEHRNGQVVVSASTREWAIKKHLYSTKSVVACESVGRVLAQRCLEAGINFMVYQPTPWEAASDSMKRLQIGMIEGGVVLQEPRRIYE</sequence>
<protein>
    <recommendedName>
        <fullName evidence="3">Large ribosomal subunit protein uL18m</fullName>
    </recommendedName>
    <alternativeName>
        <fullName>39S ribosomal protein L18, mitochondrial</fullName>
        <shortName>L18mt</shortName>
        <shortName>MRP-L18</shortName>
    </alternativeName>
</protein>
<proteinExistence type="evidence at transcript level"/>
<comment type="function">
    <text evidence="1">Together with thiosulfate sulfurtransferase (TST), acts as a mitochondrial import factor for the cytosolic 5S rRNA. The precursor form shows RNA chaperone activity; is able to fold the 5S rRNA into an import-competent conformation that is recognized by rhodanese (TST). Both the cytoplasmic and mitochondrial forms are able to bind to the helix IV-loop D in the gamma domain of the 5S rRNA (By similarity).</text>
</comment>
<comment type="subunit">
    <text evidence="1">Component of the mitochondrial ribosome large subunit (39S) which comprises a 16S rRNA and about 50 distinct proteins.</text>
</comment>
<comment type="subcellular location">
    <subcellularLocation>
        <location evidence="1">Mitochondrion</location>
    </subcellularLocation>
</comment>
<comment type="similarity">
    <text evidence="3">Belongs to the universal ribosomal protein uL18 family.</text>
</comment>
<reference key="1">
    <citation type="submission" date="2005-08" db="EMBL/GenBank/DDBJ databases">
        <authorList>
            <consortium name="NIH - Mammalian Gene Collection (MGC) project"/>
        </authorList>
    </citation>
    <scope>NUCLEOTIDE SEQUENCE [LARGE SCALE MRNA]</scope>
    <source>
        <strain>Hereford</strain>
        <tissue>Heart ventricle</tissue>
    </source>
</reference>
<accession>Q3ZBR7</accession>
<dbReference type="EMBL" id="BC103149">
    <property type="protein sequence ID" value="AAI03150.1"/>
    <property type="molecule type" value="mRNA"/>
</dbReference>
<dbReference type="RefSeq" id="NP_001029780.1">
    <property type="nucleotide sequence ID" value="NM_001034608.2"/>
</dbReference>
<dbReference type="SMR" id="Q3ZBR7"/>
<dbReference type="FunCoup" id="Q3ZBR7">
    <property type="interactions" value="2727"/>
</dbReference>
<dbReference type="STRING" id="9913.ENSBTAP00000001699"/>
<dbReference type="iPTMnet" id="Q3ZBR7"/>
<dbReference type="PaxDb" id="9913-ENSBTAP00000001699"/>
<dbReference type="GeneID" id="534352"/>
<dbReference type="KEGG" id="bta:534352"/>
<dbReference type="CTD" id="29074"/>
<dbReference type="VEuPathDB" id="HostDB:ENSBTAG00000001289"/>
<dbReference type="eggNOG" id="KOG3333">
    <property type="taxonomic scope" value="Eukaryota"/>
</dbReference>
<dbReference type="HOGENOM" id="CLU_108540_0_0_1"/>
<dbReference type="InParanoid" id="Q3ZBR7"/>
<dbReference type="OMA" id="TSEWAIK"/>
<dbReference type="OrthoDB" id="1932324at2759"/>
<dbReference type="TreeFam" id="TF313292"/>
<dbReference type="Reactome" id="R-BTA-5389840">
    <property type="pathway name" value="Mitochondrial translation elongation"/>
</dbReference>
<dbReference type="Reactome" id="R-BTA-5419276">
    <property type="pathway name" value="Mitochondrial translation termination"/>
</dbReference>
<dbReference type="Proteomes" id="UP000009136">
    <property type="component" value="Chromosome 9"/>
</dbReference>
<dbReference type="Bgee" id="ENSBTAG00000001289">
    <property type="expression patterns" value="Expressed in oocyte and 105 other cell types or tissues"/>
</dbReference>
<dbReference type="GO" id="GO:0005743">
    <property type="term" value="C:mitochondrial inner membrane"/>
    <property type="evidence" value="ECO:0000304"/>
    <property type="project" value="Reactome"/>
</dbReference>
<dbReference type="GO" id="GO:0005762">
    <property type="term" value="C:mitochondrial large ribosomal subunit"/>
    <property type="evidence" value="ECO:0000250"/>
    <property type="project" value="UniProtKB"/>
</dbReference>
<dbReference type="GO" id="GO:0005739">
    <property type="term" value="C:mitochondrion"/>
    <property type="evidence" value="ECO:0000318"/>
    <property type="project" value="GO_Central"/>
</dbReference>
<dbReference type="GO" id="GO:0008097">
    <property type="term" value="F:5S rRNA binding"/>
    <property type="evidence" value="ECO:0000250"/>
    <property type="project" value="UniProtKB"/>
</dbReference>
<dbReference type="GO" id="GO:0003735">
    <property type="term" value="F:structural constituent of ribosome"/>
    <property type="evidence" value="ECO:0007669"/>
    <property type="project" value="InterPro"/>
</dbReference>
<dbReference type="GO" id="GO:0035928">
    <property type="term" value="P:rRNA import into mitochondrion"/>
    <property type="evidence" value="ECO:0000250"/>
    <property type="project" value="UniProtKB"/>
</dbReference>
<dbReference type="GO" id="GO:0006412">
    <property type="term" value="P:translation"/>
    <property type="evidence" value="ECO:0007669"/>
    <property type="project" value="InterPro"/>
</dbReference>
<dbReference type="CDD" id="cd00432">
    <property type="entry name" value="Ribosomal_L18_L5e"/>
    <property type="match status" value="1"/>
</dbReference>
<dbReference type="FunFam" id="3.30.420.80:FF:000005">
    <property type="entry name" value="39S ribosomal protein L18, mitochondrial"/>
    <property type="match status" value="1"/>
</dbReference>
<dbReference type="Gene3D" id="3.30.420.80">
    <property type="entry name" value="Ribosomal protein S11"/>
    <property type="match status" value="1"/>
</dbReference>
<dbReference type="InterPro" id="IPR005484">
    <property type="entry name" value="Ribosomal_uL18_bac/euk"/>
</dbReference>
<dbReference type="InterPro" id="IPR036967">
    <property type="entry name" value="Ribosomal_uS11_sf"/>
</dbReference>
<dbReference type="PANTHER" id="PTHR12899">
    <property type="entry name" value="39S RIBOSOMAL PROTEIN L18, MITOCHONDRIAL"/>
    <property type="match status" value="1"/>
</dbReference>
<dbReference type="PANTHER" id="PTHR12899:SF3">
    <property type="entry name" value="LARGE RIBOSOMAL SUBUNIT PROTEIN UL18M"/>
    <property type="match status" value="1"/>
</dbReference>
<dbReference type="Pfam" id="PF00861">
    <property type="entry name" value="Ribosomal_L18p"/>
    <property type="match status" value="1"/>
</dbReference>
<dbReference type="SUPFAM" id="SSF53137">
    <property type="entry name" value="Translational machinery components"/>
    <property type="match status" value="1"/>
</dbReference>
<evidence type="ECO:0000250" key="1">
    <source>
        <dbReference type="UniProtKB" id="Q9H0U6"/>
    </source>
</evidence>
<evidence type="ECO:0000255" key="2"/>
<evidence type="ECO:0000305" key="3"/>
<name>RM18_BOVIN</name>
<gene>
    <name type="primary">MRPL18</name>
</gene>
<keyword id="KW-0143">Chaperone</keyword>
<keyword id="KW-0496">Mitochondrion</keyword>
<keyword id="KW-1185">Reference proteome</keyword>
<keyword id="KW-0687">Ribonucleoprotein</keyword>
<keyword id="KW-0689">Ribosomal protein</keyword>
<keyword id="KW-0694">RNA-binding</keyword>
<keyword id="KW-0809">Transit peptide</keyword>
<keyword id="KW-0813">Transport</keyword>
<organism>
    <name type="scientific">Bos taurus</name>
    <name type="common">Bovine</name>
    <dbReference type="NCBI Taxonomy" id="9913"/>
    <lineage>
        <taxon>Eukaryota</taxon>
        <taxon>Metazoa</taxon>
        <taxon>Chordata</taxon>
        <taxon>Craniata</taxon>
        <taxon>Vertebrata</taxon>
        <taxon>Euteleostomi</taxon>
        <taxon>Mammalia</taxon>
        <taxon>Eutheria</taxon>
        <taxon>Laurasiatheria</taxon>
        <taxon>Artiodactyla</taxon>
        <taxon>Ruminantia</taxon>
        <taxon>Pecora</taxon>
        <taxon>Bovidae</taxon>
        <taxon>Bovinae</taxon>
        <taxon>Bos</taxon>
    </lineage>
</organism>